<feature type="initiator methionine" description="Removed">
    <location>
        <position position="1"/>
    </location>
</feature>
<feature type="chain" id="PRO_0000207413" description="ADP-ribosylation factor">
    <location>
        <begin position="2"/>
        <end position="182"/>
    </location>
</feature>
<feature type="binding site" evidence="1">
    <location>
        <begin position="24"/>
        <end position="31"/>
    </location>
    <ligand>
        <name>GTP</name>
        <dbReference type="ChEBI" id="CHEBI:37565"/>
    </ligand>
</feature>
<feature type="binding site" evidence="1">
    <location>
        <begin position="67"/>
        <end position="71"/>
    </location>
    <ligand>
        <name>GTP</name>
        <dbReference type="ChEBI" id="CHEBI:37565"/>
    </ligand>
</feature>
<feature type="binding site" evidence="1">
    <location>
        <begin position="126"/>
        <end position="129"/>
    </location>
    <ligand>
        <name>GTP</name>
        <dbReference type="ChEBI" id="CHEBI:37565"/>
    </ligand>
</feature>
<feature type="lipid moiety-binding region" description="N-myristoyl glycine" evidence="2">
    <location>
        <position position="2"/>
    </location>
</feature>
<name>ARF_CRYNJ</name>
<reference key="1">
    <citation type="journal article" date="1994" name="J. Biol. Chem.">
        <title>Comparison of myristoyl-CoA:protein N-myristoyltransferases from three pathogenic fungi: Cryptococcus neoformans, Histoplasma capsulatum, and Candida albicans.</title>
        <authorList>
            <person name="Lodge J.K."/>
            <person name="Johnson R.L."/>
            <person name="Weinberg R.A."/>
            <person name="Gordon J.I."/>
        </authorList>
    </citation>
    <scope>NUCLEOTIDE SEQUENCE [GENOMIC DNA]</scope>
    <scope>MYRISTOYLATION AT GLY-2</scope>
    <source>
        <strain>L210425</strain>
    </source>
</reference>
<reference key="2">
    <citation type="journal article" date="2005" name="Science">
        <title>The genome of the basidiomycetous yeast and human pathogen Cryptococcus neoformans.</title>
        <authorList>
            <person name="Loftus B.J."/>
            <person name="Fung E."/>
            <person name="Roncaglia P."/>
            <person name="Rowley D."/>
            <person name="Amedeo P."/>
            <person name="Bruno D."/>
            <person name="Vamathevan J."/>
            <person name="Miranda M."/>
            <person name="Anderson I.J."/>
            <person name="Fraser J.A."/>
            <person name="Allen J.E."/>
            <person name="Bosdet I.E."/>
            <person name="Brent M.R."/>
            <person name="Chiu R."/>
            <person name="Doering T.L."/>
            <person name="Donlin M.J."/>
            <person name="D'Souza C.A."/>
            <person name="Fox D.S."/>
            <person name="Grinberg V."/>
            <person name="Fu J."/>
            <person name="Fukushima M."/>
            <person name="Haas B.J."/>
            <person name="Huang J.C."/>
            <person name="Janbon G."/>
            <person name="Jones S.J.M."/>
            <person name="Koo H.L."/>
            <person name="Krzywinski M.I."/>
            <person name="Kwon-Chung K.J."/>
            <person name="Lengeler K.B."/>
            <person name="Maiti R."/>
            <person name="Marra M.A."/>
            <person name="Marra R.E."/>
            <person name="Mathewson C.A."/>
            <person name="Mitchell T.G."/>
            <person name="Pertea M."/>
            <person name="Riggs F.R."/>
            <person name="Salzberg S.L."/>
            <person name="Schein J.E."/>
            <person name="Shvartsbeyn A."/>
            <person name="Shin H."/>
            <person name="Shumway M."/>
            <person name="Specht C.A."/>
            <person name="Suh B.B."/>
            <person name="Tenney A."/>
            <person name="Utterback T.R."/>
            <person name="Wickes B.L."/>
            <person name="Wortman J.R."/>
            <person name="Wye N.H."/>
            <person name="Kronstad J.W."/>
            <person name="Lodge J.K."/>
            <person name="Heitman J."/>
            <person name="Davis R.W."/>
            <person name="Fraser C.M."/>
            <person name="Hyman R.W."/>
        </authorList>
    </citation>
    <scope>NUCLEOTIDE SEQUENCE [LARGE SCALE GENOMIC DNA]</scope>
    <source>
        <strain>JEC21 / ATCC MYA-565</strain>
    </source>
</reference>
<organism>
    <name type="scientific">Cryptococcus neoformans var. neoformans serotype D (strain JEC21 / ATCC MYA-565)</name>
    <name type="common">Filobasidiella neoformans</name>
    <dbReference type="NCBI Taxonomy" id="214684"/>
    <lineage>
        <taxon>Eukaryota</taxon>
        <taxon>Fungi</taxon>
        <taxon>Dikarya</taxon>
        <taxon>Basidiomycota</taxon>
        <taxon>Agaricomycotina</taxon>
        <taxon>Tremellomycetes</taxon>
        <taxon>Tremellales</taxon>
        <taxon>Cryptococcaceae</taxon>
        <taxon>Cryptococcus</taxon>
        <taxon>Cryptococcus neoformans species complex</taxon>
    </lineage>
</organism>
<proteinExistence type="evidence at protein level"/>
<dbReference type="EMBL" id="L25115">
    <property type="protein sequence ID" value="AAA17546.1"/>
    <property type="molecule type" value="Genomic_DNA"/>
</dbReference>
<dbReference type="EMBL" id="AE017347">
    <property type="protein sequence ID" value="AAW44725.1"/>
    <property type="molecule type" value="Genomic_DNA"/>
</dbReference>
<dbReference type="PIR" id="C49993">
    <property type="entry name" value="C49993"/>
</dbReference>
<dbReference type="RefSeq" id="XP_572032.1">
    <property type="nucleotide sequence ID" value="XM_572032.1"/>
</dbReference>
<dbReference type="SMR" id="P0CM16"/>
<dbReference type="FunCoup" id="P0CM16">
    <property type="interactions" value="439"/>
</dbReference>
<dbReference type="STRING" id="214684.P0CM16"/>
<dbReference type="iPTMnet" id="P0CM16"/>
<dbReference type="PaxDb" id="214684-P0CM16"/>
<dbReference type="EnsemblFungi" id="AAW44725">
    <property type="protein sequence ID" value="AAW44725"/>
    <property type="gene ID" value="CNG03220"/>
</dbReference>
<dbReference type="GeneID" id="3258864"/>
<dbReference type="KEGG" id="cne:CNG03220"/>
<dbReference type="VEuPathDB" id="FungiDB:CNG03220"/>
<dbReference type="eggNOG" id="KOG0070">
    <property type="taxonomic scope" value="Eukaryota"/>
</dbReference>
<dbReference type="HOGENOM" id="CLU_040729_9_3_1"/>
<dbReference type="InParanoid" id="P0CM16"/>
<dbReference type="OMA" id="IRQRHWF"/>
<dbReference type="OrthoDB" id="2011769at2759"/>
<dbReference type="Proteomes" id="UP000002149">
    <property type="component" value="Chromosome 7"/>
</dbReference>
<dbReference type="GO" id="GO:0005737">
    <property type="term" value="C:cytoplasm"/>
    <property type="evidence" value="ECO:0000318"/>
    <property type="project" value="GO_Central"/>
</dbReference>
<dbReference type="GO" id="GO:0005794">
    <property type="term" value="C:Golgi apparatus"/>
    <property type="evidence" value="ECO:0007669"/>
    <property type="project" value="UniProtKB-SubCell"/>
</dbReference>
<dbReference type="GO" id="GO:0005886">
    <property type="term" value="C:plasma membrane"/>
    <property type="evidence" value="ECO:0000318"/>
    <property type="project" value="GO_Central"/>
</dbReference>
<dbReference type="GO" id="GO:0005525">
    <property type="term" value="F:GTP binding"/>
    <property type="evidence" value="ECO:0000318"/>
    <property type="project" value="GO_Central"/>
</dbReference>
<dbReference type="GO" id="GO:0003924">
    <property type="term" value="F:GTPase activity"/>
    <property type="evidence" value="ECO:0007669"/>
    <property type="project" value="InterPro"/>
</dbReference>
<dbReference type="GO" id="GO:0006886">
    <property type="term" value="P:intracellular protein transport"/>
    <property type="evidence" value="ECO:0000318"/>
    <property type="project" value="GO_Central"/>
</dbReference>
<dbReference type="GO" id="GO:0016192">
    <property type="term" value="P:vesicle-mediated transport"/>
    <property type="evidence" value="ECO:0000318"/>
    <property type="project" value="GO_Central"/>
</dbReference>
<dbReference type="CDD" id="cd04150">
    <property type="entry name" value="Arf1_5_like"/>
    <property type="match status" value="1"/>
</dbReference>
<dbReference type="FunFam" id="3.40.50.300:FF:000554">
    <property type="entry name" value="ADP-ribosylation factor 1"/>
    <property type="match status" value="1"/>
</dbReference>
<dbReference type="Gene3D" id="3.40.50.300">
    <property type="entry name" value="P-loop containing nucleotide triphosphate hydrolases"/>
    <property type="match status" value="1"/>
</dbReference>
<dbReference type="InterPro" id="IPR045872">
    <property type="entry name" value="Arf1-5-like"/>
</dbReference>
<dbReference type="InterPro" id="IPR027417">
    <property type="entry name" value="P-loop_NTPase"/>
</dbReference>
<dbReference type="InterPro" id="IPR005225">
    <property type="entry name" value="Small_GTP-bd"/>
</dbReference>
<dbReference type="InterPro" id="IPR024156">
    <property type="entry name" value="Small_GTPase_ARF"/>
</dbReference>
<dbReference type="InterPro" id="IPR006689">
    <property type="entry name" value="Small_GTPase_ARF/SAR"/>
</dbReference>
<dbReference type="NCBIfam" id="TIGR00231">
    <property type="entry name" value="small_GTP"/>
    <property type="match status" value="1"/>
</dbReference>
<dbReference type="PANTHER" id="PTHR11711">
    <property type="entry name" value="ADP RIBOSYLATION FACTOR-RELATED"/>
    <property type="match status" value="1"/>
</dbReference>
<dbReference type="Pfam" id="PF00025">
    <property type="entry name" value="Arf"/>
    <property type="match status" value="1"/>
</dbReference>
<dbReference type="PRINTS" id="PR00328">
    <property type="entry name" value="SAR1GTPBP"/>
</dbReference>
<dbReference type="SMART" id="SM00177">
    <property type="entry name" value="ARF"/>
    <property type="match status" value="1"/>
</dbReference>
<dbReference type="SMART" id="SM00175">
    <property type="entry name" value="RAB"/>
    <property type="match status" value="1"/>
</dbReference>
<dbReference type="SMART" id="SM00178">
    <property type="entry name" value="SAR"/>
    <property type="match status" value="1"/>
</dbReference>
<dbReference type="SUPFAM" id="SSF52540">
    <property type="entry name" value="P-loop containing nucleoside triphosphate hydrolases"/>
    <property type="match status" value="1"/>
</dbReference>
<dbReference type="PROSITE" id="PS51417">
    <property type="entry name" value="ARF"/>
    <property type="match status" value="1"/>
</dbReference>
<comment type="function">
    <text>GTP-binding protein involved in protein trafficking; may modulate vesicle budding and uncoating within the Golgi apparatus.</text>
</comment>
<comment type="subcellular location">
    <subcellularLocation>
        <location>Golgi apparatus</location>
    </subcellularLocation>
</comment>
<comment type="similarity">
    <text evidence="3">Belongs to the small GTPase superfamily. Arf family.</text>
</comment>
<protein>
    <recommendedName>
        <fullName>ADP-ribosylation factor</fullName>
    </recommendedName>
</protein>
<evidence type="ECO:0000250" key="1"/>
<evidence type="ECO:0000269" key="2">
    <source>
    </source>
</evidence>
<evidence type="ECO:0000305" key="3"/>
<accession>P0CM16</accession>
<accession>P34728</accession>
<accession>Q55PQ9</accession>
<accession>Q5KDP9</accession>
<gene>
    <name type="primary">ARF</name>
    <name type="ordered locus">CNG03220</name>
</gene>
<keyword id="KW-0931">ER-Golgi transport</keyword>
<keyword id="KW-0333">Golgi apparatus</keyword>
<keyword id="KW-0342">GTP-binding</keyword>
<keyword id="KW-0449">Lipoprotein</keyword>
<keyword id="KW-0519">Myristate</keyword>
<keyword id="KW-0547">Nucleotide-binding</keyword>
<keyword id="KW-0653">Protein transport</keyword>
<keyword id="KW-1185">Reference proteome</keyword>
<keyword id="KW-0813">Transport</keyword>
<sequence>MGLSVSKLLNGLFGKKEMRILMVGLDAAGKTTILYKLKLGEIVTTIPTIGFNVETVEYKNISFTVWDVGGQDKIRPLWRHYFQNTQGIIFVVDSNDRERITEAREELQRMLSEDELRDALLLVFANKQDLPNAMNAAEITDKLGLHSLRQRSWYIQAACATSGDGLYEGLEWLSANLKRKSP</sequence>